<comment type="function">
    <text evidence="1">Produces ATP from ADP in the presence of a proton gradient across the membrane. The gamma chain is believed to be important in regulating ATPase activity and the flow of protons through the CF(0) complex.</text>
</comment>
<comment type="subunit">
    <text evidence="1">F-type ATPases have 2 components, CF(1) - the catalytic core - and CF(0) - the membrane proton channel. CF(1) has five subunits: alpha(3), beta(3), gamma(1), delta(1), epsilon(1). CF(0) has three main subunits: a, b and c.</text>
</comment>
<comment type="subcellular location">
    <subcellularLocation>
        <location evidence="1">Cell inner membrane</location>
        <topology evidence="1">Peripheral membrane protein</topology>
    </subcellularLocation>
</comment>
<comment type="similarity">
    <text evidence="1">Belongs to the ATPase gamma chain family.</text>
</comment>
<dbReference type="EMBL" id="CP001072">
    <property type="protein sequence ID" value="ACD48573.1"/>
    <property type="molecule type" value="Genomic_DNA"/>
</dbReference>
<dbReference type="RefSeq" id="WP_000002171.1">
    <property type="nucleotide sequence ID" value="NC_010698.2"/>
</dbReference>
<dbReference type="SMR" id="B2UUP1"/>
<dbReference type="GeneID" id="93237737"/>
<dbReference type="KEGG" id="hps:HPSH_05835"/>
<dbReference type="HOGENOM" id="CLU_050669_0_1_7"/>
<dbReference type="GO" id="GO:0005886">
    <property type="term" value="C:plasma membrane"/>
    <property type="evidence" value="ECO:0007669"/>
    <property type="project" value="UniProtKB-SubCell"/>
</dbReference>
<dbReference type="GO" id="GO:0045259">
    <property type="term" value="C:proton-transporting ATP synthase complex"/>
    <property type="evidence" value="ECO:0007669"/>
    <property type="project" value="UniProtKB-KW"/>
</dbReference>
<dbReference type="GO" id="GO:0005524">
    <property type="term" value="F:ATP binding"/>
    <property type="evidence" value="ECO:0007669"/>
    <property type="project" value="UniProtKB-UniRule"/>
</dbReference>
<dbReference type="GO" id="GO:0046933">
    <property type="term" value="F:proton-transporting ATP synthase activity, rotational mechanism"/>
    <property type="evidence" value="ECO:0007669"/>
    <property type="project" value="UniProtKB-UniRule"/>
</dbReference>
<dbReference type="GO" id="GO:0042777">
    <property type="term" value="P:proton motive force-driven plasma membrane ATP synthesis"/>
    <property type="evidence" value="ECO:0007669"/>
    <property type="project" value="UniProtKB-UniRule"/>
</dbReference>
<dbReference type="CDD" id="cd12151">
    <property type="entry name" value="F1-ATPase_gamma"/>
    <property type="match status" value="1"/>
</dbReference>
<dbReference type="FunFam" id="1.10.287.80:FF:000007">
    <property type="entry name" value="ATP synthase gamma chain"/>
    <property type="match status" value="1"/>
</dbReference>
<dbReference type="FunFam" id="3.40.1380.10:FF:000006">
    <property type="entry name" value="ATP synthase gamma chain"/>
    <property type="match status" value="1"/>
</dbReference>
<dbReference type="Gene3D" id="3.40.1380.10">
    <property type="match status" value="1"/>
</dbReference>
<dbReference type="Gene3D" id="1.10.287.80">
    <property type="entry name" value="ATP synthase, gamma subunit, helix hairpin domain"/>
    <property type="match status" value="2"/>
</dbReference>
<dbReference type="HAMAP" id="MF_00815">
    <property type="entry name" value="ATP_synth_gamma_bact"/>
    <property type="match status" value="1"/>
</dbReference>
<dbReference type="InterPro" id="IPR035968">
    <property type="entry name" value="ATP_synth_F1_ATPase_gsu"/>
</dbReference>
<dbReference type="InterPro" id="IPR000131">
    <property type="entry name" value="ATP_synth_F1_gsu"/>
</dbReference>
<dbReference type="NCBIfam" id="TIGR01146">
    <property type="entry name" value="ATPsyn_F1gamma"/>
    <property type="match status" value="1"/>
</dbReference>
<dbReference type="PANTHER" id="PTHR11693">
    <property type="entry name" value="ATP SYNTHASE GAMMA CHAIN"/>
    <property type="match status" value="1"/>
</dbReference>
<dbReference type="PANTHER" id="PTHR11693:SF22">
    <property type="entry name" value="ATP SYNTHASE SUBUNIT GAMMA, MITOCHONDRIAL"/>
    <property type="match status" value="1"/>
</dbReference>
<dbReference type="Pfam" id="PF00231">
    <property type="entry name" value="ATP-synt"/>
    <property type="match status" value="1"/>
</dbReference>
<dbReference type="PRINTS" id="PR00126">
    <property type="entry name" value="ATPASEGAMMA"/>
</dbReference>
<dbReference type="SUPFAM" id="SSF52943">
    <property type="entry name" value="ATP synthase (F1-ATPase), gamma subunit"/>
    <property type="match status" value="1"/>
</dbReference>
<proteinExistence type="inferred from homology"/>
<evidence type="ECO:0000255" key="1">
    <source>
        <dbReference type="HAMAP-Rule" id="MF_00815"/>
    </source>
</evidence>
<accession>B2UUP1</accession>
<keyword id="KW-0066">ATP synthesis</keyword>
<keyword id="KW-0997">Cell inner membrane</keyword>
<keyword id="KW-1003">Cell membrane</keyword>
<keyword id="KW-0139">CF(1)</keyword>
<keyword id="KW-0375">Hydrogen ion transport</keyword>
<keyword id="KW-0406">Ion transport</keyword>
<keyword id="KW-0472">Membrane</keyword>
<keyword id="KW-0813">Transport</keyword>
<reference key="1">
    <citation type="submission" date="2008-05" db="EMBL/GenBank/DDBJ databases">
        <title>Genome sequence of Helicobacter pylori from the remote Amazon: traces of Asian ancestry of the first Americans.</title>
        <authorList>
            <person name="Kersulyte D."/>
            <person name="Kalia A."/>
            <person name="Gilman R.H."/>
            <person name="Berg D.E."/>
        </authorList>
    </citation>
    <scope>NUCLEOTIDE SEQUENCE [LARGE SCALE GENOMIC DNA]</scope>
    <source>
        <strain>Shi470</strain>
    </source>
</reference>
<feature type="chain" id="PRO_1000134161" description="ATP synthase gamma chain">
    <location>
        <begin position="1"/>
        <end position="301"/>
    </location>
</feature>
<name>ATPG_HELPS</name>
<gene>
    <name evidence="1" type="primary">atpG</name>
    <name type="ordered locus">HPSH_05835</name>
</gene>
<organism>
    <name type="scientific">Helicobacter pylori (strain Shi470)</name>
    <dbReference type="NCBI Taxonomy" id="512562"/>
    <lineage>
        <taxon>Bacteria</taxon>
        <taxon>Pseudomonadati</taxon>
        <taxon>Campylobacterota</taxon>
        <taxon>Epsilonproteobacteria</taxon>
        <taxon>Campylobacterales</taxon>
        <taxon>Helicobacteraceae</taxon>
        <taxon>Helicobacter</taxon>
    </lineage>
</organism>
<sequence length="301" mass="34113">MANLRDIRKKIGSVKNTQKITHAMKLVSTSKLRKAEEVARNSRAYALKLDAVFDDVLSKMKNQGIEDIQSKYFRELERLEIKKVDIIFITADKGLCGGFNTNTIKKVLACTNEYKEKDIKVRLRGIGKKGNEYFSFNGIEVLDKINNLSSMPNYERAQEFMKKVVEDYLSGKTDKVIIIHNGFKNMISQEIRVKTILPIGYKIIHQNPQPNETQETITSEPSGSEDEILDSLAEKYVEYSLYYALIDSLAAEHSARMQAMDTATNNAKDLVKTLTISYNKARQEAITTELVEINAGVEALK</sequence>
<protein>
    <recommendedName>
        <fullName evidence="1">ATP synthase gamma chain</fullName>
    </recommendedName>
    <alternativeName>
        <fullName evidence="1">ATP synthase F1 sector gamma subunit</fullName>
    </alternativeName>
    <alternativeName>
        <fullName evidence="1">F-ATPase gamma subunit</fullName>
    </alternativeName>
</protein>